<comment type="function">
    <text evidence="12 13 18">Repressor of translation initiation that regulates EIF4E activity by preventing its assembly into the eIF4F complex: hypophosphorylated form competes with EIF4G1/EIF4G3 and strongly binds to EIF4E, leading to repress translation. In contrast, hyperphosphorylated form dissociates from EIF4E, allowing interaction between EIF4G1/EIF4G3 and EIF4E, leading to initiation of translation. Mediates the regulation of protein translation by hormones, growth factors and other stimuli that signal through the MAP kinase and mTORC1 pathways.</text>
</comment>
<comment type="subunit">
    <text evidence="4 7 9 10 11 12 14 15 16 18 19">Hypophosphorylated EIF4EBP1 competes with EIF4G1/EIF4G3 to interact with EIF4E; insulin stimulated MAP-kinase (MAPK1 and MAPK3) or mTORC1 phosphorylation of EIF4EBP1 causes dissociation of the complex allowing EIF4G1/EIF4G3 to bind and consequent initiation of translation (PubMed:12150926, PubMed:16271312, PubMed:17368478, PubMed:17631896, PubMed:22578813, PubMed:25702871, PubMed:7935836, PubMed:8521827). Interacts (via TOS motif) with RPTOR; promoting phosphorylation by mTORC1 (PubMed:12747827, PubMed:24403073, PubMed:29236692).</text>
</comment>
<comment type="interaction">
    <interactant intactId="EBI-74090">
        <id>Q13541</id>
    </interactant>
    <interactant intactId="EBI-528269">
        <id>Q9UKV8</id>
        <label>AGO2</label>
    </interactant>
    <organismsDiffer>false</organismsDiffer>
    <experiments>2</experiments>
</comment>
<comment type="interaction">
    <interactant intactId="EBI-74090">
        <id>Q13541</id>
    </interactant>
    <interactant intactId="EBI-742054">
        <id>Q96D03</id>
        <label>DDIT4L</label>
    </interactant>
    <organismsDiffer>false</organismsDiffer>
    <experiments>3</experiments>
</comment>
<comment type="interaction">
    <interactant intactId="EBI-74090">
        <id>Q13541</id>
    </interactant>
    <interactant intactId="EBI-73440">
        <id>P06730</id>
        <label>EIF4E</label>
    </interactant>
    <organismsDiffer>false</organismsDiffer>
    <experiments>31</experiments>
</comment>
<comment type="interaction">
    <interactant intactId="EBI-74090">
        <id>Q13541</id>
    </interactant>
    <interactant intactId="EBI-32715456">
        <id>P06730-1</id>
        <label>EIF4E</label>
    </interactant>
    <organismsDiffer>false</organismsDiffer>
    <experiments>3</experiments>
</comment>
<comment type="interaction">
    <interactant intactId="EBI-74090">
        <id>Q13541</id>
    </interactant>
    <interactant intactId="EBI-18394358">
        <id>A6NMX2</id>
        <label>EIF4E1B</label>
    </interactant>
    <organismsDiffer>false</organismsDiffer>
    <experiments>4</experiments>
</comment>
<comment type="interaction">
    <interactant intactId="EBI-74090">
        <id>Q13541</id>
    </interactant>
    <interactant intactId="EBI-398610">
        <id>O60573</id>
        <label>EIF4E2</label>
    </interactant>
    <organismsDiffer>false</organismsDiffer>
    <experiments>3</experiments>
</comment>
<comment type="interaction">
    <interactant intactId="EBI-74090">
        <id>Q13541</id>
    </interactant>
    <interactant intactId="EBI-32715389">
        <id>O60573-1</id>
        <label>EIF4E2</label>
    </interactant>
    <organismsDiffer>false</organismsDiffer>
    <experiments>6</experiments>
</comment>
<comment type="interaction">
    <interactant intactId="EBI-74090">
        <id>Q13541</id>
    </interactant>
    <interactant intactId="EBI-11959475">
        <id>P25791-3</id>
        <label>LMO2</label>
    </interactant>
    <organismsDiffer>false</organismsDiffer>
    <experiments>3</experiments>
</comment>
<comment type="interaction">
    <interactant intactId="EBI-74090">
        <id>Q13541</id>
    </interactant>
    <interactant intactId="EBI-2864512">
        <id>P50221</id>
        <label>MEOX1</label>
    </interactant>
    <organismsDiffer>false</organismsDiffer>
    <experiments>3</experiments>
</comment>
<comment type="interaction">
    <interactant intactId="EBI-74090">
        <id>Q13541</id>
    </interactant>
    <interactant intactId="EBI-359260">
        <id>P42345</id>
        <label>MTOR</label>
    </interactant>
    <organismsDiffer>false</organismsDiffer>
    <experiments>2</experiments>
</comment>
<comment type="interaction">
    <interactant intactId="EBI-74090">
        <id>Q13541</id>
    </interactant>
    <interactant intactId="EBI-79165">
        <id>Q9NRD5</id>
        <label>PICK1</label>
    </interactant>
    <organismsDiffer>false</organismsDiffer>
    <experiments>3</experiments>
</comment>
<comment type="interaction">
    <interactant intactId="EBI-74090">
        <id>Q13541</id>
    </interactant>
    <interactant intactId="EBI-12029004">
        <id>P78424</id>
        <label>POU6F2</label>
    </interactant>
    <organismsDiffer>false</organismsDiffer>
    <experiments>3</experiments>
</comment>
<comment type="interaction">
    <interactant intactId="EBI-74090">
        <id>Q13541</id>
    </interactant>
    <interactant intactId="EBI-307352">
        <id>Q04864</id>
        <label>REL</label>
    </interactant>
    <organismsDiffer>false</organismsDiffer>
    <experiments>3</experiments>
</comment>
<comment type="interaction">
    <interactant intactId="EBI-74090">
        <id>Q13541</id>
    </interactant>
    <interactant intactId="EBI-10829018">
        <id>Q04864-2</id>
        <label>REL</label>
    </interactant>
    <organismsDiffer>false</organismsDiffer>
    <experiments>3</experiments>
</comment>
<comment type="interaction">
    <interactant intactId="EBI-74090">
        <id>Q13541</id>
    </interactant>
    <interactant intactId="EBI-1567928">
        <id>Q8N122</id>
        <label>RPTOR</label>
    </interactant>
    <organismsDiffer>false</organismsDiffer>
    <experiments>5</experiments>
</comment>
<comment type="interaction">
    <interactant intactId="EBI-74090">
        <id>Q13541</id>
    </interactant>
    <interactant intactId="EBI-533224">
        <id>P15884</id>
        <label>TCF4</label>
    </interactant>
    <organismsDiffer>false</organismsDiffer>
    <experiments>3</experiments>
</comment>
<comment type="interaction">
    <interactant intactId="EBI-74090">
        <id>Q13541</id>
    </interactant>
    <interactant intactId="EBI-625509">
        <id>Q8N720</id>
        <label>ZNF655</label>
    </interactant>
    <organismsDiffer>false</organismsDiffer>
    <experiments>3</experiments>
</comment>
<comment type="interaction">
    <interactant intactId="EBI-74090">
        <id>Q13541</id>
    </interactant>
    <interactant intactId="EBI-1571628">
        <id>Q9JLN9</id>
        <label>Mtor</label>
    </interactant>
    <organismsDiffer>true</organismsDiffer>
    <experiments>2</experiments>
</comment>
<comment type="subcellular location">
    <subcellularLocation>
        <location evidence="13">Cytoplasm</location>
    </subcellularLocation>
    <subcellularLocation>
        <location evidence="13">Nucleus</location>
    </subcellularLocation>
    <text evidence="2">Localization to the nucleus is unaffected by phosphorylation status.</text>
</comment>
<comment type="domain">
    <text evidence="7 14">The TOS motif mediates interaction with RPTOR, leading to promote phosphorylation by mTORC1 complex.</text>
</comment>
<comment type="PTM">
    <text evidence="5 7 12 14 16 18 20">Phosphorylated on serine and threonine residues in response to insulin, EGF and PDGF (PubMed:12588975, PubMed:12747827, PubMed:22578813, PubMed:24403073, PubMed:29236692, PubMed:7935836, PubMed:9465032). Phosphorylation at Thr-37, Thr-46, Ser-65 and Thr-70, corresponding to the hyperphosphorylated form, is regulated by mTORC1 and abolishes binding to EIF4E (PubMed:12588975, PubMed:12747827, PubMed:22578813, PubMed:24403073, PubMed:29236692, PubMed:7935836, PubMed:9465032).</text>
</comment>
<comment type="PTM">
    <text evidence="12">Ubiquitinated: when eIF4E levels are low, hypophosphorylated form is ubiquitinated by the BCR(KLHL25) complex, leading to its degradation and serving as a homeostatic mechanism to maintain translation and prevent eIF4E inhibition when eIF4E levels are low. Not ubiquitinated when hyperphosphorylated (at Thr-37, Thr-46, Ser-65 and Thr-70) or associated with eIF4E.</text>
</comment>
<comment type="similarity">
    <text evidence="21">Belongs to the eIF4E-binding protein family.</text>
</comment>
<comment type="online information" name="Atlas of Genetics and Cytogenetics in Oncology and Haematology">
    <link uri="https://atlasgeneticsoncology.org/gene/40432/EIF4EBP1"/>
</comment>
<gene>
    <name type="primary">EIF4EBP1</name>
</gene>
<sequence length="118" mass="12580">MSGGSSCSQTPSRAIPATRRVVLGDGVQLPPGDYSTTPGGTLFSTTPGGTRIIYDRKFLMECRNSPVTKTPPRDLPTIPGVTSPSSDEPPMEASQSHLRNSPEDKRAGGEESQFEMDI</sequence>
<keyword id="KW-0002">3D-structure</keyword>
<keyword id="KW-0007">Acetylation</keyword>
<keyword id="KW-0963">Cytoplasm</keyword>
<keyword id="KW-0903">Direct protein sequencing</keyword>
<keyword id="KW-1017">Isopeptide bond</keyword>
<keyword id="KW-0539">Nucleus</keyword>
<keyword id="KW-0597">Phosphoprotein</keyword>
<keyword id="KW-0652">Protein synthesis inhibitor</keyword>
<keyword id="KW-1267">Proteomics identification</keyword>
<keyword id="KW-1185">Reference proteome</keyword>
<keyword id="KW-0810">Translation regulation</keyword>
<keyword id="KW-0832">Ubl conjugation</keyword>
<reference key="1">
    <citation type="journal article" date="1994" name="Nature">
        <title>Insulin-dependent stimulation of protein synthesis by phosphorylation of a regulator of 5'-cap function.</title>
        <authorList>
            <person name="Pause A."/>
            <person name="Belsham G.J."/>
            <person name="Gingras A.-C."/>
            <person name="Donze O."/>
            <person name="Lin T.-A."/>
            <person name="Lawrence J.C. Jr."/>
            <person name="Sonenberg N."/>
        </authorList>
    </citation>
    <scope>NUCLEOTIDE SEQUENCE [MRNA]</scope>
    <scope>FUNCTION</scope>
    <scope>INTERACTION WITH EIF4E</scope>
    <scope>PHOSPHORYLATION</scope>
    <source>
        <tissue>Placenta</tissue>
    </source>
</reference>
<reference evidence="23" key="2">
    <citation type="submission" date="2000-06" db="EMBL/GenBank/DDBJ databases">
        <title>Identification of multiple genes and immunogenic epitopes of pancreatic cancer cells.</title>
        <authorList>
            <person name="Ito M."/>
            <person name="Shichijo S."/>
            <person name="Tsuda N."/>
            <person name="Ochi M."/>
            <person name="Harashima N."/>
            <person name="Saito N."/>
            <person name="Itoh K."/>
        </authorList>
    </citation>
    <scope>NUCLEOTIDE SEQUENCE [MRNA]</scope>
</reference>
<reference evidence="23" key="3">
    <citation type="submission" date="2003-05" db="EMBL/GenBank/DDBJ databases">
        <title>Cloning of human full-length CDSs in BD Creator(TM) system donor vector.</title>
        <authorList>
            <person name="Kalnine N."/>
            <person name="Chen X."/>
            <person name="Rolfs A."/>
            <person name="Halleck A."/>
            <person name="Hines L."/>
            <person name="Eisenstein S."/>
            <person name="Koundinya M."/>
            <person name="Raphael J."/>
            <person name="Moreira D."/>
            <person name="Kelley T."/>
            <person name="LaBaer J."/>
            <person name="Lin Y."/>
            <person name="Phelan M."/>
            <person name="Farmer A."/>
        </authorList>
    </citation>
    <scope>NUCLEOTIDE SEQUENCE [LARGE SCALE MRNA]</scope>
</reference>
<reference evidence="23" key="4">
    <citation type="submission" date="2004-06" db="EMBL/GenBank/DDBJ databases">
        <title>Cloning of human full open reading frames in Gateway(TM) system entry vector (pDONR201).</title>
        <authorList>
            <person name="Ebert L."/>
            <person name="Schick M."/>
            <person name="Neubert P."/>
            <person name="Schatten R."/>
            <person name="Henze S."/>
            <person name="Korn B."/>
        </authorList>
    </citation>
    <scope>NUCLEOTIDE SEQUENCE [LARGE SCALE MRNA]</scope>
</reference>
<reference key="5">
    <citation type="journal article" date="2004" name="Nat. Genet.">
        <title>Complete sequencing and characterization of 21,243 full-length human cDNAs.</title>
        <authorList>
            <person name="Ota T."/>
            <person name="Suzuki Y."/>
            <person name="Nishikawa T."/>
            <person name="Otsuki T."/>
            <person name="Sugiyama T."/>
            <person name="Irie R."/>
            <person name="Wakamatsu A."/>
            <person name="Hayashi K."/>
            <person name="Sato H."/>
            <person name="Nagai K."/>
            <person name="Kimura K."/>
            <person name="Makita H."/>
            <person name="Sekine M."/>
            <person name="Obayashi M."/>
            <person name="Nishi T."/>
            <person name="Shibahara T."/>
            <person name="Tanaka T."/>
            <person name="Ishii S."/>
            <person name="Yamamoto J."/>
            <person name="Saito K."/>
            <person name="Kawai Y."/>
            <person name="Isono Y."/>
            <person name="Nakamura Y."/>
            <person name="Nagahari K."/>
            <person name="Murakami K."/>
            <person name="Yasuda T."/>
            <person name="Iwayanagi T."/>
            <person name="Wagatsuma M."/>
            <person name="Shiratori A."/>
            <person name="Sudo H."/>
            <person name="Hosoiri T."/>
            <person name="Kaku Y."/>
            <person name="Kodaira H."/>
            <person name="Kondo H."/>
            <person name="Sugawara M."/>
            <person name="Takahashi M."/>
            <person name="Kanda K."/>
            <person name="Yokoi T."/>
            <person name="Furuya T."/>
            <person name="Kikkawa E."/>
            <person name="Omura Y."/>
            <person name="Abe K."/>
            <person name="Kamihara K."/>
            <person name="Katsuta N."/>
            <person name="Sato K."/>
            <person name="Tanikawa M."/>
            <person name="Yamazaki M."/>
            <person name="Ninomiya K."/>
            <person name="Ishibashi T."/>
            <person name="Yamashita H."/>
            <person name="Murakawa K."/>
            <person name="Fujimori K."/>
            <person name="Tanai H."/>
            <person name="Kimata M."/>
            <person name="Watanabe M."/>
            <person name="Hiraoka S."/>
            <person name="Chiba Y."/>
            <person name="Ishida S."/>
            <person name="Ono Y."/>
            <person name="Takiguchi S."/>
            <person name="Watanabe S."/>
            <person name="Yosida M."/>
            <person name="Hotuta T."/>
            <person name="Kusano J."/>
            <person name="Kanehori K."/>
            <person name="Takahashi-Fujii A."/>
            <person name="Hara H."/>
            <person name="Tanase T.-O."/>
            <person name="Nomura Y."/>
            <person name="Togiya S."/>
            <person name="Komai F."/>
            <person name="Hara R."/>
            <person name="Takeuchi K."/>
            <person name="Arita M."/>
            <person name="Imose N."/>
            <person name="Musashino K."/>
            <person name="Yuuki H."/>
            <person name="Oshima A."/>
            <person name="Sasaki N."/>
            <person name="Aotsuka S."/>
            <person name="Yoshikawa Y."/>
            <person name="Matsunawa H."/>
            <person name="Ichihara T."/>
            <person name="Shiohata N."/>
            <person name="Sano S."/>
            <person name="Moriya S."/>
            <person name="Momiyama H."/>
            <person name="Satoh N."/>
            <person name="Takami S."/>
            <person name="Terashima Y."/>
            <person name="Suzuki O."/>
            <person name="Nakagawa S."/>
            <person name="Senoh A."/>
            <person name="Mizoguchi H."/>
            <person name="Goto Y."/>
            <person name="Shimizu F."/>
            <person name="Wakebe H."/>
            <person name="Hishigaki H."/>
            <person name="Watanabe T."/>
            <person name="Sugiyama A."/>
            <person name="Takemoto M."/>
            <person name="Kawakami B."/>
            <person name="Yamazaki M."/>
            <person name="Watanabe K."/>
            <person name="Kumagai A."/>
            <person name="Itakura S."/>
            <person name="Fukuzumi Y."/>
            <person name="Fujimori Y."/>
            <person name="Komiyama M."/>
            <person name="Tashiro H."/>
            <person name="Tanigami A."/>
            <person name="Fujiwara T."/>
            <person name="Ono T."/>
            <person name="Yamada K."/>
            <person name="Fujii Y."/>
            <person name="Ozaki K."/>
            <person name="Hirao M."/>
            <person name="Ohmori Y."/>
            <person name="Kawabata A."/>
            <person name="Hikiji T."/>
            <person name="Kobatake N."/>
            <person name="Inagaki H."/>
            <person name="Ikema Y."/>
            <person name="Okamoto S."/>
            <person name="Okitani R."/>
            <person name="Kawakami T."/>
            <person name="Noguchi S."/>
            <person name="Itoh T."/>
            <person name="Shigeta K."/>
            <person name="Senba T."/>
            <person name="Matsumura K."/>
            <person name="Nakajima Y."/>
            <person name="Mizuno T."/>
            <person name="Morinaga M."/>
            <person name="Sasaki M."/>
            <person name="Togashi T."/>
            <person name="Oyama M."/>
            <person name="Hata H."/>
            <person name="Watanabe M."/>
            <person name="Komatsu T."/>
            <person name="Mizushima-Sugano J."/>
            <person name="Satoh T."/>
            <person name="Shirai Y."/>
            <person name="Takahashi Y."/>
            <person name="Nakagawa K."/>
            <person name="Okumura K."/>
            <person name="Nagase T."/>
            <person name="Nomura N."/>
            <person name="Kikuchi H."/>
            <person name="Masuho Y."/>
            <person name="Yamashita R."/>
            <person name="Nakai K."/>
            <person name="Yada T."/>
            <person name="Nakamura Y."/>
            <person name="Ohara O."/>
            <person name="Isogai T."/>
            <person name="Sugano S."/>
        </authorList>
    </citation>
    <scope>NUCLEOTIDE SEQUENCE [LARGE SCALE MRNA]</scope>
    <source>
        <tissue>Brain</tissue>
    </source>
</reference>
<reference evidence="23" key="6">
    <citation type="submission" date="2005-09" db="EMBL/GenBank/DDBJ databases">
        <authorList>
            <person name="Mural R.J."/>
            <person name="Istrail S."/>
            <person name="Sutton G.G."/>
            <person name="Florea L."/>
            <person name="Halpern A.L."/>
            <person name="Mobarry C.M."/>
            <person name="Lippert R."/>
            <person name="Walenz B."/>
            <person name="Shatkay H."/>
            <person name="Dew I."/>
            <person name="Miller J.R."/>
            <person name="Flanigan M.J."/>
            <person name="Edwards N.J."/>
            <person name="Bolanos R."/>
            <person name="Fasulo D."/>
            <person name="Halldorsson B.V."/>
            <person name="Hannenhalli S."/>
            <person name="Turner R."/>
            <person name="Yooseph S."/>
            <person name="Lu F."/>
            <person name="Nusskern D.R."/>
            <person name="Shue B.C."/>
            <person name="Zheng X.H."/>
            <person name="Zhong F."/>
            <person name="Delcher A.L."/>
            <person name="Huson D.H."/>
            <person name="Kravitz S.A."/>
            <person name="Mouchard L."/>
            <person name="Reinert K."/>
            <person name="Remington K.A."/>
            <person name="Clark A.G."/>
            <person name="Waterman M.S."/>
            <person name="Eichler E.E."/>
            <person name="Adams M.D."/>
            <person name="Hunkapiller M.W."/>
            <person name="Myers E.W."/>
            <person name="Venter J.C."/>
        </authorList>
    </citation>
    <scope>NUCLEOTIDE SEQUENCE [LARGE SCALE GENOMIC DNA]</scope>
</reference>
<reference key="7">
    <citation type="journal article" date="2004" name="Genome Res.">
        <title>The status, quality, and expansion of the NIH full-length cDNA project: the Mammalian Gene Collection (MGC).</title>
        <authorList>
            <consortium name="The MGC Project Team"/>
        </authorList>
    </citation>
    <scope>NUCLEOTIDE SEQUENCE [LARGE SCALE MRNA]</scope>
    <source>
        <tissue>Colon</tissue>
        <tissue evidence="8">Lung</tissue>
    </source>
</reference>
<reference key="8">
    <citation type="journal article" date="2003" name="Nat. Biotechnol.">
        <title>Exploring proteomes and analyzing protein processing by mass spectrometric identification of sorted N-terminal peptides.</title>
        <authorList>
            <person name="Gevaert K."/>
            <person name="Goethals M."/>
            <person name="Martens L."/>
            <person name="Van Damme J."/>
            <person name="Staes A."/>
            <person name="Thomas G.R."/>
            <person name="Vandekerckhove J."/>
        </authorList>
    </citation>
    <scope>PROTEIN SEQUENCE OF 2-13</scope>
    <scope>ACETYLATION AT SER-2</scope>
    <source>
        <tissue>Platelet</tissue>
    </source>
</reference>
<reference key="9">
    <citation type="journal article" date="1995" name="EMBO J.">
        <title>Repression of cap-dependent translation by 4E-binding protein 1: competition with p220 for binding to eukaryotic initiation factor-4E.</title>
        <authorList>
            <person name="Haghighat A."/>
            <person name="Mader S."/>
            <person name="Pause A."/>
            <person name="Sonenberg N."/>
        </authorList>
    </citation>
    <scope>INTERACTION WITH EIF4E AND EIF4G</scope>
</reference>
<reference key="10">
    <citation type="journal article" date="1998" name="Proc. Natl. Acad. Sci. U.S.A.">
        <title>RAFT1 phosphorylation of the translational regulators p70 S6 kinase and 4E-BP1.</title>
        <authorList>
            <person name="Burnett P.E."/>
            <person name="Barrow R.K."/>
            <person name="Cohen N.A."/>
            <person name="Snyder S.H."/>
            <person name="Sabatini D.M."/>
        </authorList>
    </citation>
    <scope>PHOSPHORYLATION BY MTOR</scope>
</reference>
<reference key="11">
    <citation type="journal article" date="2002" name="Cell">
        <title>Raptor, a binding partner of target of rapamycin (TOR), mediates TOR action.</title>
        <authorList>
            <person name="Hara K."/>
            <person name="Maruki Y."/>
            <person name="Long X."/>
            <person name="Yoshino K."/>
            <person name="Oshiro N."/>
            <person name="Hidayat S."/>
            <person name="Tokunaga C."/>
            <person name="Avruch J."/>
            <person name="Yonezawa K."/>
        </authorList>
    </citation>
    <scope>INTERACTION WITH RPTOR</scope>
</reference>
<reference key="12">
    <citation type="journal article" date="2003" name="Curr. Biol.">
        <title>TOS motif-mediated raptor binding regulates 4E-BP1 multisite phosphorylation and function.</title>
        <authorList>
            <person name="Schalm S.S."/>
            <person name="Fingar D.C."/>
            <person name="Sabatini D.M."/>
            <person name="Blenis J."/>
        </authorList>
    </citation>
    <scope>INTERACTION WITH RPTOR</scope>
    <scope>PHOSPHORYLATION AT THR-37; THR-46; SER-65 AND THR-70 BY MTOR</scope>
</reference>
<reference key="13">
    <citation type="journal article" date="2003" name="Mol. Cell. Biol.">
        <title>The C terminus of initiation factor 4E-binding protein 1 contains multiple regulatory features that influence its function and phosphorylation.</title>
        <authorList>
            <person name="Wang X."/>
            <person name="Li W."/>
            <person name="Parra J.L."/>
            <person name="Beugnet A."/>
            <person name="Proud C.G."/>
        </authorList>
    </citation>
    <scope>PHOSPHORYLATION AT SER-65; SER-101 AND SER-112</scope>
    <scope>PROTEIN SEQUENCE</scope>
    <scope>IDENTIFICATION BY MASS SPECTROMETRY</scope>
</reference>
<reference key="14">
    <citation type="journal article" date="2006" name="Cell">
        <title>Global, in vivo, and site-specific phosphorylation dynamics in signaling networks.</title>
        <authorList>
            <person name="Olsen J.V."/>
            <person name="Blagoev B."/>
            <person name="Gnad F."/>
            <person name="Macek B."/>
            <person name="Kumar C."/>
            <person name="Mortensen P."/>
            <person name="Mann M."/>
        </authorList>
    </citation>
    <scope>PHOSPHORYLATION [LARGE SCALE ANALYSIS] AT SER-65</scope>
    <scope>IDENTIFICATION BY MASS SPECTROMETRY [LARGE SCALE ANALYSIS]</scope>
    <source>
        <tissue>Cervix carcinoma</tissue>
    </source>
</reference>
<reference key="15">
    <citation type="journal article" date="2007" name="Electrophoresis">
        <title>Toward a global characterization of the phosphoproteome in prostate cancer cells: identification of phosphoproteins in the LNCaP cell line.</title>
        <authorList>
            <person name="Giorgianni F."/>
            <person name="Zhao Y."/>
            <person name="Desiderio D.M."/>
            <person name="Beranova-Giorgianni S."/>
        </authorList>
    </citation>
    <scope>IDENTIFICATION BY MASS SPECTROMETRY [LARGE SCALE ANALYSIS]</scope>
    <source>
        <tissue>Prostate cancer</tissue>
    </source>
</reference>
<reference key="16">
    <citation type="journal article" date="2007" name="Science">
        <title>ATM and ATR substrate analysis reveals extensive protein networks responsive to DNA damage.</title>
        <authorList>
            <person name="Matsuoka S."/>
            <person name="Ballif B.A."/>
            <person name="Smogorzewska A."/>
            <person name="McDonald E.R. III"/>
            <person name="Hurov K.E."/>
            <person name="Luo J."/>
            <person name="Bakalarski C.E."/>
            <person name="Zhao Z."/>
            <person name="Solimini N."/>
            <person name="Lerenthal Y."/>
            <person name="Shiloh Y."/>
            <person name="Gygi S.P."/>
            <person name="Elledge S.J."/>
        </authorList>
    </citation>
    <scope>PHOSPHORYLATION [LARGE SCALE ANALYSIS] AT SER-112</scope>
    <scope>IDENTIFICATION BY MASS SPECTROMETRY [LARGE SCALE ANALYSIS]</scope>
    <source>
        <tissue>Embryonic kidney</tissue>
    </source>
</reference>
<reference key="17">
    <citation type="journal article" date="2008" name="J. Proteome Res.">
        <title>Combining protein-based IMAC, peptide-based IMAC, and MudPIT for efficient phosphoproteomic analysis.</title>
        <authorList>
            <person name="Cantin G.T."/>
            <person name="Yi W."/>
            <person name="Lu B."/>
            <person name="Park S.K."/>
            <person name="Xu T."/>
            <person name="Lee J.-D."/>
            <person name="Yates J.R. III"/>
        </authorList>
    </citation>
    <scope>PHOSPHORYLATION [LARGE SCALE ANALYSIS] AT THR-50; THR-70 AND SER-101</scope>
    <scope>IDENTIFICATION BY MASS SPECTROMETRY [LARGE SCALE ANALYSIS]</scope>
    <source>
        <tissue>Cervix carcinoma</tissue>
    </source>
</reference>
<reference key="18">
    <citation type="journal article" date="2008" name="Proc. Natl. Acad. Sci. U.S.A.">
        <title>A quantitative atlas of mitotic phosphorylation.</title>
        <authorList>
            <person name="Dephoure N."/>
            <person name="Zhou C."/>
            <person name="Villen J."/>
            <person name="Beausoleil S.A."/>
            <person name="Bakalarski C.E."/>
            <person name="Elledge S.J."/>
            <person name="Gygi S.P."/>
        </authorList>
    </citation>
    <scope>PHOSPHORYLATION [LARGE SCALE ANALYSIS] AT THR-37; THR-41; THR-46; THR-50; TYR-54; SER-65; THR-70 AND SER-83</scope>
    <scope>IDENTIFICATION BY MASS SPECTROMETRY [LARGE SCALE ANALYSIS]</scope>
    <source>
        <tissue>Cervix carcinoma</tissue>
    </source>
</reference>
<reference key="19">
    <citation type="journal article" date="2009" name="Anal. Chem.">
        <title>Lys-N and trypsin cover complementary parts of the phosphoproteome in a refined SCX-based approach.</title>
        <authorList>
            <person name="Gauci S."/>
            <person name="Helbig A.O."/>
            <person name="Slijper M."/>
            <person name="Krijgsveld J."/>
            <person name="Heck A.J."/>
            <person name="Mohammed S."/>
        </authorList>
    </citation>
    <scope>IDENTIFICATION BY MASS SPECTROMETRY [LARGE SCALE ANALYSIS]</scope>
</reference>
<reference key="20">
    <citation type="journal article" date="2009" name="Sci. Signal.">
        <title>Quantitative phosphoproteomic analysis of T cell receptor signaling reveals system-wide modulation of protein-protein interactions.</title>
        <authorList>
            <person name="Mayya V."/>
            <person name="Lundgren D.H."/>
            <person name="Hwang S.-I."/>
            <person name="Rezaul K."/>
            <person name="Wu L."/>
            <person name="Eng J.K."/>
            <person name="Rodionov V."/>
            <person name="Han D.K."/>
        </authorList>
    </citation>
    <scope>PHOSPHORYLATION [LARGE SCALE ANALYSIS] AT THR-37 AND THR-46</scope>
    <scope>IDENTIFICATION BY MASS SPECTROMETRY [LARGE SCALE ANALYSIS]</scope>
    <source>
        <tissue>Leukemic T-cell</tissue>
    </source>
</reference>
<reference key="21">
    <citation type="journal article" date="2010" name="Sci. Signal.">
        <title>Quantitative phosphoproteomics reveals widespread full phosphorylation site occupancy during mitosis.</title>
        <authorList>
            <person name="Olsen J.V."/>
            <person name="Vermeulen M."/>
            <person name="Santamaria A."/>
            <person name="Kumar C."/>
            <person name="Miller M.L."/>
            <person name="Jensen L.J."/>
            <person name="Gnad F."/>
            <person name="Cox J."/>
            <person name="Jensen T.S."/>
            <person name="Nigg E.A."/>
            <person name="Brunak S."/>
            <person name="Mann M."/>
        </authorList>
    </citation>
    <scope>PHOSPHORYLATION [LARGE SCALE ANALYSIS] AT THR-37 AND THR-70</scope>
    <scope>IDENTIFICATION BY MASS SPECTROMETRY [LARGE SCALE ANALYSIS]</scope>
    <source>
        <tissue>Cervix carcinoma</tissue>
    </source>
</reference>
<reference key="22">
    <citation type="journal article" date="2011" name="BMC Syst. Biol.">
        <title>Initial characterization of the human central proteome.</title>
        <authorList>
            <person name="Burkard T.R."/>
            <person name="Planyavsky M."/>
            <person name="Kaupe I."/>
            <person name="Breitwieser F.P."/>
            <person name="Buerckstuemmer T."/>
            <person name="Bennett K.L."/>
            <person name="Superti-Furga G."/>
            <person name="Colinge J."/>
        </authorList>
    </citation>
    <scope>IDENTIFICATION BY MASS SPECTROMETRY [LARGE SCALE ANALYSIS]</scope>
</reference>
<reference key="23">
    <citation type="journal article" date="2011" name="Sci. Signal.">
        <title>System-wide temporal characterization of the proteome and phosphoproteome of human embryonic stem cell differentiation.</title>
        <authorList>
            <person name="Rigbolt K.T."/>
            <person name="Prokhorova T.A."/>
            <person name="Akimov V."/>
            <person name="Henningsen J."/>
            <person name="Johansen P.T."/>
            <person name="Kratchmarova I."/>
            <person name="Kassem M."/>
            <person name="Mann M."/>
            <person name="Olsen J.V."/>
            <person name="Blagoev B."/>
        </authorList>
    </citation>
    <scope>PHOSPHORYLATION [LARGE SCALE ANALYSIS] AT THR-70 AND SER-112</scope>
    <scope>IDENTIFICATION BY MASS SPECTROMETRY [LARGE SCALE ANALYSIS]</scope>
</reference>
<reference key="24">
    <citation type="journal article" date="2012" name="FEBS Lett.">
        <title>4E-BP3 regulates eIF4E-mediated nuclear mRNA export and interacts with replication protein A2.</title>
        <authorList>
            <person name="Chen C.C."/>
            <person name="Lee J.C."/>
            <person name="Chang M.C."/>
        </authorList>
    </citation>
    <scope>FUNCTION</scope>
    <scope>SUBCELLULAR LOCATION</scope>
</reference>
<reference key="25">
    <citation type="journal article" date="2012" name="Mol. Cell">
        <title>Translational homeostasis via the mRNA cap-binding protein, eIF4E.</title>
        <authorList>
            <person name="Yanagiya A."/>
            <person name="Suyama E."/>
            <person name="Adachi H."/>
            <person name="Svitkin Y.V."/>
            <person name="Aza-Blanc P."/>
            <person name="Imataka H."/>
            <person name="Mikami S."/>
            <person name="Martineau Y."/>
            <person name="Ronai Z.A."/>
            <person name="Sonenberg N."/>
        </authorList>
    </citation>
    <scope>FUNCTION</scope>
    <scope>INTERACTION WITH EIF4E</scope>
    <scope>UBIQUITINATION AT LYS-57</scope>
    <scope>PHOSPHORYLATION AT THR-37; THR-46; SER-65 AND THR-70</scope>
    <scope>MUTAGENESIS OF THR-37; THR-46; LYS-57; 59-LEU-MET-60; SER-65; LYS-69; THR-70 AND LYS-105</scope>
</reference>
<reference key="26">
    <citation type="journal article" date="2012" name="Proc. Natl. Acad. Sci. U.S.A.">
        <title>N-terminal acetylome analyses and functional insights of the N-terminal acetyltransferase NatB.</title>
        <authorList>
            <person name="Van Damme P."/>
            <person name="Lasa M."/>
            <person name="Polevoda B."/>
            <person name="Gazquez C."/>
            <person name="Elosegui-Artola A."/>
            <person name="Kim D.S."/>
            <person name="De Juan-Pardo E."/>
            <person name="Demeyer K."/>
            <person name="Hole K."/>
            <person name="Larrea E."/>
            <person name="Timmerman E."/>
            <person name="Prieto J."/>
            <person name="Arnesen T."/>
            <person name="Sherman F."/>
            <person name="Gevaert K."/>
            <person name="Aldabe R."/>
        </authorList>
    </citation>
    <scope>ACETYLATION [LARGE SCALE ANALYSIS] AT SER-2</scope>
    <scope>CLEAVAGE OF INITIATOR METHIONINE [LARGE SCALE ANALYSIS]</scope>
    <scope>IDENTIFICATION BY MASS SPECTROMETRY [LARGE SCALE ANALYSIS]</scope>
</reference>
<reference key="27">
    <citation type="journal article" date="2013" name="J. Proteome Res.">
        <title>Toward a comprehensive characterization of a human cancer cell phosphoproteome.</title>
        <authorList>
            <person name="Zhou H."/>
            <person name="Di Palma S."/>
            <person name="Preisinger C."/>
            <person name="Peng M."/>
            <person name="Polat A.N."/>
            <person name="Heck A.J."/>
            <person name="Mohammed S."/>
        </authorList>
    </citation>
    <scope>PHOSPHORYLATION [LARGE SCALE ANALYSIS] AT THR-37; THR-41; SER-65; THR-70; SER-101 AND SER-112</scope>
    <scope>IDENTIFICATION BY MASS SPECTROMETRY [LARGE SCALE ANALYSIS]</scope>
    <source>
        <tissue>Cervix carcinoma</tissue>
        <tissue>Erythroleukemia</tissue>
    </source>
</reference>
<reference key="28">
    <citation type="journal article" date="2014" name="J. Biol. Chem.">
        <title>Characterization of the Raptor/4E-BP1 interaction by chemical cross-linking coupled with mass spectrometry analysis.</title>
        <authorList>
            <person name="Coffman K."/>
            <person name="Yang B."/>
            <person name="Lu J."/>
            <person name="Tetlow A.L."/>
            <person name="Pelliccio E."/>
            <person name="Lu S."/>
            <person name="Guo D.C."/>
            <person name="Tang C."/>
            <person name="Dong M.Q."/>
            <person name="Tamanoi F."/>
        </authorList>
    </citation>
    <scope>INTERACTION WITH RPTOR</scope>
    <scope>PHOSPHORYLATION BY MTOR</scope>
</reference>
<reference key="29">
    <citation type="journal article" date="2014" name="J. Proteomics">
        <title>An enzyme assisted RP-RPLC approach for in-depth analysis of human liver phosphoproteome.</title>
        <authorList>
            <person name="Bian Y."/>
            <person name="Song C."/>
            <person name="Cheng K."/>
            <person name="Dong M."/>
            <person name="Wang F."/>
            <person name="Huang J."/>
            <person name="Sun D."/>
            <person name="Wang L."/>
            <person name="Ye M."/>
            <person name="Zou H."/>
        </authorList>
    </citation>
    <scope>PHOSPHORYLATION [LARGE SCALE ANALYSIS] AT SER-65; THR-70 AND THR-77</scope>
    <scope>IDENTIFICATION BY MASS SPECTROMETRY [LARGE SCALE ANALYSIS]</scope>
    <source>
        <tissue>Liver</tissue>
    </source>
</reference>
<reference key="30">
    <citation type="journal article" date="2018" name="Sci. Adv.">
        <title>Mammalian EAK-7 activates alternative mTOR signaling to regulate cell proliferation and migration.</title>
        <authorList>
            <person name="Nguyen J.T."/>
            <person name="Ray C."/>
            <person name="Fox A.L."/>
            <person name="Mendonca D.B."/>
            <person name="Kim J.K."/>
            <person name="Krebsbach P.H."/>
        </authorList>
    </citation>
    <scope>PHOSPHORYLATION AT THR-37; THR-46; SER-65 AND THR-70</scope>
</reference>
<reference key="31">
    <citation type="journal article" date="1998" name="Protein Sci.">
        <title>The interaction of eIF4E with 4E-BP1 is an induced fit to a completely disordered protein.</title>
        <authorList>
            <person name="Fletcher C.M."/>
            <person name="Wagner G."/>
        </authorList>
    </citation>
    <scope>STRUCTURE BY NMR OF 4-118</scope>
</reference>
<reference key="32">
    <citation type="journal article" date="2005" name="Biochim. Biophys. Acta">
        <title>Structural basis for mRNA cap-binding regulation of eukaryotic initiation factor 4E by 4E-binding protein, studied by spectroscopic, X-ray crystal structural, and molecular dynamics simulation methods.</title>
        <authorList>
            <person name="Tomoo K."/>
            <person name="Matsushita Y."/>
            <person name="Fujisaki H."/>
            <person name="Abiko F."/>
            <person name="Shen X."/>
            <person name="Taniguchi T."/>
            <person name="Miyagawa H."/>
            <person name="Kitamura K."/>
            <person name="Miura K."/>
            <person name="Ishida T."/>
        </authorList>
    </citation>
    <scope>X-RAY CRYSTALLOGRAPHY (2.1 ANGSTROMS) OF 36-70 IN COMPLEX WITH EIF4E AND MRNA CAP ANALOG</scope>
</reference>
<reference key="33">
    <citation type="journal article" date="2007" name="J. Mol. Biol.">
        <title>Structures of the human eIF4E homologous protein, h4EHP, in its m7GTP-bound and unliganded forms.</title>
        <authorList>
            <person name="Rosettani P."/>
            <person name="Knapp S."/>
            <person name="Vismara M.-G."/>
            <person name="Rusconi L."/>
            <person name="Cameron A.D."/>
        </authorList>
    </citation>
    <scope>X-RAY CRYSTALLOGRAPHY (1.7 ANGSTROMS) OF 51-67 IN COMPLEX WITH EIF4E2 AND MRNA CAP ANALOG</scope>
</reference>
<reference key="34">
    <citation type="journal article" date="2007" name="J. Mol. Biol.">
        <title>Crystallographic and mass spectrometric characterisation of eIF4E with N7-alkylated cap derivatives.</title>
        <authorList>
            <person name="Brown C.J."/>
            <person name="McNae I."/>
            <person name="Fischer P.M."/>
            <person name="Walkinshaw M.D."/>
        </authorList>
    </citation>
    <scope>X-RAY CRYSTALLOGRAPHY (2.1 ANGSTROMS) OF 51-64 IN COMPLEX WITH EIF4E AND MRNA CAP ANALOG</scope>
</reference>
<reference evidence="24" key="35">
    <citation type="journal article" date="2015" name="Mol. Cell">
        <title>Molecular architecture of 4E-BP translational inhibitors bound to eIF4E.</title>
        <authorList>
            <person name="Peter D."/>
            <person name="Igreja C."/>
            <person name="Weber R."/>
            <person name="Wohlbold L."/>
            <person name="Weiler C."/>
            <person name="Ebertsch L."/>
            <person name="Weichenrieder O."/>
            <person name="Izaurralde E."/>
        </authorList>
    </citation>
    <scope>X-RAY CRYSTALLOGRAPHY (1.75 ANGSTROMS) OF 50-83 IN COMPLEX WITH EIF4E</scope>
    <scope>INTERACTION WITH EIF4E</scope>
    <scope>PHOSPHORYLATION AT SER-65 AND THR-70</scope>
</reference>
<reference evidence="25" key="36">
    <citation type="journal article" date="2017" name="Nature">
        <title>Mechanisms of mTORC1 activation by RHEB and inhibition by PRAS40.</title>
        <authorList>
            <person name="Yang H."/>
            <person name="Jiang X."/>
            <person name="Li B."/>
            <person name="Yang H.J."/>
            <person name="Miller M."/>
            <person name="Yang A."/>
            <person name="Dhar A."/>
            <person name="Pavletich N.P."/>
        </authorList>
    </citation>
    <scope>STRUCTURE BY ELECTRON MICROSCOPY (3.43 ANGSTROMS) IN COMPLEX WITH MLST8; MTOR; RPTOR AND RHEB</scope>
    <scope>PHOSPHORYLATION AT THR-37 AND THR-46</scope>
    <scope>INTERACTION WITH RTOR</scope>
    <scope>MUTAGENESIS OF GLN-113</scope>
</reference>
<accession>Q13541</accession>
<accession>B2R502</accession>
<accession>D3DSW8</accession>
<accession>Q6IBN3</accession>
<protein>
    <recommendedName>
        <fullName>Eukaryotic translation initiation factor 4E-binding protein 1</fullName>
        <shortName>4E-BP1</shortName>
        <shortName>eIF4E-binding protein 1</shortName>
    </recommendedName>
    <alternativeName>
        <fullName>Phosphorylated heat- and acid-stable protein regulated by insulin 1</fullName>
        <shortName>PHAS-I</shortName>
    </alternativeName>
</protein>
<organism evidence="23">
    <name type="scientific">Homo sapiens</name>
    <name type="common">Human</name>
    <dbReference type="NCBI Taxonomy" id="9606"/>
    <lineage>
        <taxon>Eukaryota</taxon>
        <taxon>Metazoa</taxon>
        <taxon>Chordata</taxon>
        <taxon>Craniata</taxon>
        <taxon>Vertebrata</taxon>
        <taxon>Euteleostomi</taxon>
        <taxon>Mammalia</taxon>
        <taxon>Eutheria</taxon>
        <taxon>Euarchontoglires</taxon>
        <taxon>Primates</taxon>
        <taxon>Haplorrhini</taxon>
        <taxon>Catarrhini</taxon>
        <taxon>Hominidae</taxon>
        <taxon>Homo</taxon>
    </lineage>
</organism>
<evidence type="ECO:0000250" key="1">
    <source>
        <dbReference type="UniProtKB" id="P70445"/>
    </source>
</evidence>
<evidence type="ECO:0000250" key="2">
    <source>
        <dbReference type="UniProtKB" id="Q60876"/>
    </source>
</evidence>
<evidence type="ECO:0000256" key="3">
    <source>
        <dbReference type="SAM" id="MobiDB-lite"/>
    </source>
</evidence>
<evidence type="ECO:0000269" key="4">
    <source>
    </source>
</evidence>
<evidence type="ECO:0000269" key="5">
    <source>
    </source>
</evidence>
<evidence type="ECO:0000269" key="6">
    <source>
    </source>
</evidence>
<evidence type="ECO:0000269" key="7">
    <source>
    </source>
</evidence>
<evidence type="ECO:0000269" key="8">
    <source>
    </source>
</evidence>
<evidence type="ECO:0000269" key="9">
    <source>
    </source>
</evidence>
<evidence type="ECO:0000269" key="10">
    <source>
    </source>
</evidence>
<evidence type="ECO:0000269" key="11">
    <source>
    </source>
</evidence>
<evidence type="ECO:0000269" key="12">
    <source>
    </source>
</evidence>
<evidence type="ECO:0000269" key="13">
    <source>
    </source>
</evidence>
<evidence type="ECO:0000269" key="14">
    <source>
    </source>
</evidence>
<evidence type="ECO:0000269" key="15">
    <source>
    </source>
</evidence>
<evidence type="ECO:0000269" key="16">
    <source>
    </source>
</evidence>
<evidence type="ECO:0000269" key="17">
    <source>
    </source>
</evidence>
<evidence type="ECO:0000269" key="18">
    <source>
    </source>
</evidence>
<evidence type="ECO:0000269" key="19">
    <source>
    </source>
</evidence>
<evidence type="ECO:0000269" key="20">
    <source>
    </source>
</evidence>
<evidence type="ECO:0000305" key="21"/>
<evidence type="ECO:0000305" key="22">
    <source>
    </source>
</evidence>
<evidence type="ECO:0000312" key="23">
    <source>
        <dbReference type="EMBL" id="BAB18650.1"/>
    </source>
</evidence>
<evidence type="ECO:0007744" key="24">
    <source>
        <dbReference type="PDB" id="4UED"/>
    </source>
</evidence>
<evidence type="ECO:0007744" key="25">
    <source>
        <dbReference type="PDB" id="6BCU"/>
    </source>
</evidence>
<evidence type="ECO:0007744" key="26">
    <source>
    </source>
</evidence>
<evidence type="ECO:0007744" key="27">
    <source>
    </source>
</evidence>
<evidence type="ECO:0007744" key="28">
    <source>
    </source>
</evidence>
<evidence type="ECO:0007744" key="29">
    <source>
    </source>
</evidence>
<evidence type="ECO:0007744" key="30">
    <source>
    </source>
</evidence>
<evidence type="ECO:0007744" key="31">
    <source>
    </source>
</evidence>
<evidence type="ECO:0007744" key="32">
    <source>
    </source>
</evidence>
<evidence type="ECO:0007744" key="33">
    <source>
    </source>
</evidence>
<evidence type="ECO:0007744" key="34">
    <source>
    </source>
</evidence>
<evidence type="ECO:0007744" key="35">
    <source>
    </source>
</evidence>
<evidence type="ECO:0007829" key="36">
    <source>
        <dbReference type="PDB" id="2JGB"/>
    </source>
</evidence>
<evidence type="ECO:0007829" key="37">
    <source>
        <dbReference type="PDB" id="4UED"/>
    </source>
</evidence>
<feature type="initiator methionine" description="Removed" evidence="6 33">
    <location>
        <position position="1"/>
    </location>
</feature>
<feature type="chain" id="PRO_0000190513" description="Eukaryotic translation initiation factor 4E-binding protein 1">
    <location>
        <begin position="2"/>
        <end position="118"/>
    </location>
</feature>
<feature type="region of interest" description="Disordered" evidence="3">
    <location>
        <begin position="1"/>
        <end position="20"/>
    </location>
</feature>
<feature type="region of interest" description="Disordered" evidence="3">
    <location>
        <begin position="25"/>
        <end position="48"/>
    </location>
</feature>
<feature type="region of interest" description="Disordered" evidence="3">
    <location>
        <begin position="64"/>
        <end position="118"/>
    </location>
</feature>
<feature type="short sequence motif" description="YXXXXLphi motif" evidence="1">
    <location>
        <begin position="54"/>
        <end position="60"/>
    </location>
</feature>
<feature type="short sequence motif" description="TOS motif" evidence="7 14">
    <location>
        <begin position="114"/>
        <end position="118"/>
    </location>
</feature>
<feature type="compositionally biased region" description="Polar residues" evidence="3">
    <location>
        <begin position="1"/>
        <end position="12"/>
    </location>
</feature>
<feature type="compositionally biased region" description="Polar residues" evidence="3">
    <location>
        <begin position="34"/>
        <end position="48"/>
    </location>
</feature>
<feature type="compositionally biased region" description="Basic and acidic residues" evidence="3">
    <location>
        <begin position="100"/>
        <end position="109"/>
    </location>
</feature>
<feature type="modified residue" description="N-acetylserine" evidence="6 33">
    <location>
        <position position="2"/>
    </location>
</feature>
<feature type="modified residue" description="Phosphothreonine; by MTOR" evidence="7 12 16 17 29 30 31 34">
    <location>
        <position position="37"/>
    </location>
</feature>
<feature type="modified residue" description="Phosphothreonine" evidence="29 34">
    <location>
        <position position="41"/>
    </location>
</feature>
<feature type="modified residue" description="Phosphoserine" evidence="2">
    <location>
        <position position="44"/>
    </location>
</feature>
<feature type="modified residue" description="Phosphothreonine; by MTOR" evidence="7 12 16 17 29 30">
    <location>
        <position position="46"/>
    </location>
</feature>
<feature type="modified residue" description="Phosphothreonine" evidence="28 29">
    <location>
        <position position="50"/>
    </location>
</feature>
<feature type="modified residue" description="Phosphotyrosine" evidence="29">
    <location>
        <position position="54"/>
    </location>
</feature>
<feature type="modified residue" description="Phosphoserine; by DYRK2, MAPK1, MAPK3 and MTOR" evidence="5 7 12 15 17 26 29 34 35">
    <location>
        <position position="65"/>
    </location>
</feature>
<feature type="modified residue" description="Phosphothreonine; by MTOR" evidence="7 12 15 17 28 29 31 32 34 35">
    <location>
        <position position="70"/>
    </location>
</feature>
<feature type="modified residue" description="Phosphothreonine" evidence="35">
    <location>
        <position position="77"/>
    </location>
</feature>
<feature type="modified residue" description="Phosphoserine" evidence="29">
    <location>
        <position position="83"/>
    </location>
</feature>
<feature type="modified residue" description="Phosphoserine" evidence="2">
    <location>
        <position position="96"/>
    </location>
</feature>
<feature type="modified residue" description="Phosphoserine; by DYRK2" evidence="5 28 34">
    <location>
        <position position="101"/>
    </location>
</feature>
<feature type="modified residue" description="Phosphoserine" evidence="5 27 32 34">
    <location>
        <position position="112"/>
    </location>
</feature>
<feature type="cross-link" description="Glycyl lysine isopeptide (Lys-Gly) (interchain with G-Cter in ubiquitin)" evidence="22">
    <location>
        <position position="57"/>
    </location>
</feature>
<feature type="mutagenesis site" description="Abolishes phosphorylation by MTOR and increased ubiquitination by the BCR(KLHL25) complex; when associated with A-46; A-65 and A-70." evidence="12">
    <original>T</original>
    <variation>A</variation>
    <location>
        <position position="37"/>
    </location>
</feature>
<feature type="mutagenesis site" description="Abolishes phosphorylation by MTOR and increased ubiquitination by the BCR(KLHL25) complex; when associated with A-37; A-65 and A-70." evidence="12">
    <original>T</original>
    <variation>A</variation>
    <location>
        <position position="46"/>
    </location>
</feature>
<feature type="mutagenesis site" description="Impaired ubiquitination by the BCR(KLHL25) complex." evidence="12">
    <original>K</original>
    <variation>R</variation>
    <location>
        <position position="57"/>
    </location>
</feature>
<feature type="mutagenesis site" description="Abolishes eIF4E-binding. Increased ubiquitination by the BCR(KLHL25) complex." evidence="12">
    <original>LM</original>
    <variation>AA</variation>
    <location>
        <begin position="59"/>
        <end position="60"/>
    </location>
</feature>
<feature type="mutagenesis site" description="Abolishes phosphorylation by MTOR and increased ubiquitination by the BCR(KLHL25) complex; when associated with A-37; A-46 and A-70." evidence="12">
    <original>S</original>
    <variation>A</variation>
    <location>
        <position position="65"/>
    </location>
</feature>
<feature type="mutagenesis site" description="Does not affect ubiquitination by the BCR(KLHL25) complex." evidence="12">
    <original>K</original>
    <variation>R</variation>
    <location>
        <position position="69"/>
    </location>
</feature>
<feature type="mutagenesis site" description="Abolishes phosphorylation by MTOR and increased ubiquitination by the BCR(KLHL25) complex; when associated with A-37; A-46 and A-65." evidence="12">
    <original>T</original>
    <variation>A</variation>
    <location>
        <position position="70"/>
    </location>
</feature>
<feature type="mutagenesis site" description="Does not affect ubiquitination by the BCR(KLHL25) complex." evidence="12">
    <original>K</original>
    <variation>R</variation>
    <location>
        <position position="105"/>
    </location>
</feature>
<feature type="mutagenesis site" description="Reduced interaction with RPTOR." evidence="16">
    <original>Q</original>
    <variation>A</variation>
    <location>
        <position position="113"/>
    </location>
</feature>
<feature type="helix" evidence="36">
    <location>
        <begin position="56"/>
        <end position="61"/>
    </location>
</feature>
<feature type="helix" evidence="36">
    <location>
        <begin position="62"/>
        <end position="64"/>
    </location>
</feature>
<feature type="helix" evidence="37">
    <location>
        <begin position="66"/>
        <end position="69"/>
    </location>
</feature>
<feature type="turn" evidence="37">
    <location>
        <begin position="79"/>
        <end position="82"/>
    </location>
</feature>
<name>4EBP1_HUMAN</name>
<dbReference type="EMBL" id="L36055">
    <property type="protein sequence ID" value="AAA62269.1"/>
    <property type="molecule type" value="mRNA"/>
</dbReference>
<dbReference type="EMBL" id="AB044548">
    <property type="protein sequence ID" value="BAB18650.1"/>
    <property type="molecule type" value="mRNA"/>
</dbReference>
<dbReference type="EMBL" id="BT007162">
    <property type="protein sequence ID" value="AAP35826.1"/>
    <property type="molecule type" value="mRNA"/>
</dbReference>
<dbReference type="EMBL" id="CR456769">
    <property type="protein sequence ID" value="CAG33050.1"/>
    <property type="molecule type" value="mRNA"/>
</dbReference>
<dbReference type="EMBL" id="AK312011">
    <property type="protein sequence ID" value="BAG34949.1"/>
    <property type="molecule type" value="mRNA"/>
</dbReference>
<dbReference type="EMBL" id="CH471080">
    <property type="protein sequence ID" value="EAW63341.1"/>
    <property type="molecule type" value="Genomic_DNA"/>
</dbReference>
<dbReference type="EMBL" id="CH471080">
    <property type="protein sequence ID" value="EAW63342.1"/>
    <property type="molecule type" value="Genomic_DNA"/>
</dbReference>
<dbReference type="EMBL" id="BC004459">
    <property type="protein sequence ID" value="AAH04459.1"/>
    <property type="molecule type" value="mRNA"/>
</dbReference>
<dbReference type="EMBL" id="BC058073">
    <property type="protein sequence ID" value="AAH58073.1"/>
    <property type="molecule type" value="mRNA"/>
</dbReference>
<dbReference type="CCDS" id="CCDS6100.1"/>
<dbReference type="PIR" id="S50866">
    <property type="entry name" value="S50866"/>
</dbReference>
<dbReference type="RefSeq" id="NP_004086.1">
    <property type="nucleotide sequence ID" value="NM_004095.4"/>
</dbReference>
<dbReference type="PDB" id="1EJ4">
    <property type="method" value="X-ray"/>
    <property type="resolution" value="2.25 A"/>
    <property type="chains" value="B=51-64"/>
</dbReference>
<dbReference type="PDB" id="1EJH">
    <property type="method" value="X-ray"/>
    <property type="resolution" value="2.20 A"/>
    <property type="chains" value="E/F/G/H=54-66"/>
</dbReference>
<dbReference type="PDB" id="1WKW">
    <property type="method" value="X-ray"/>
    <property type="resolution" value="2.10 A"/>
    <property type="chains" value="B=47-66"/>
</dbReference>
<dbReference type="PDB" id="2JGB">
    <property type="method" value="X-ray"/>
    <property type="resolution" value="1.70 A"/>
    <property type="chains" value="B=51-67"/>
</dbReference>
<dbReference type="PDB" id="2JGC">
    <property type="method" value="X-ray"/>
    <property type="resolution" value="2.40 A"/>
    <property type="chains" value="B=51-67"/>
</dbReference>
<dbReference type="PDB" id="2V8W">
    <property type="method" value="X-ray"/>
    <property type="resolution" value="2.30 A"/>
    <property type="chains" value="B/F=51-64"/>
</dbReference>
<dbReference type="PDB" id="2V8X">
    <property type="method" value="X-ray"/>
    <property type="resolution" value="2.30 A"/>
    <property type="chains" value="B/F=51-64"/>
</dbReference>
<dbReference type="PDB" id="2V8Y">
    <property type="method" value="X-ray"/>
    <property type="resolution" value="2.10 A"/>
    <property type="chains" value="B/F=51-64"/>
</dbReference>
<dbReference type="PDB" id="3HXG">
    <property type="method" value="X-ray"/>
    <property type="resolution" value="2.10 A"/>
    <property type="chains" value="C=51-67"/>
</dbReference>
<dbReference type="PDB" id="3HXI">
    <property type="method" value="X-ray"/>
    <property type="resolution" value="1.80 A"/>
    <property type="chains" value="C=51-67"/>
</dbReference>
<dbReference type="PDB" id="3M93">
    <property type="method" value="X-ray"/>
    <property type="resolution" value="2.90 A"/>
    <property type="chains" value="C=51-67"/>
</dbReference>
<dbReference type="PDB" id="3M94">
    <property type="method" value="X-ray"/>
    <property type="resolution" value="2.05 A"/>
    <property type="chains" value="C=51-67"/>
</dbReference>
<dbReference type="PDB" id="3U7X">
    <property type="method" value="X-ray"/>
    <property type="resolution" value="2.10 A"/>
    <property type="chains" value="C/D=47-66"/>
</dbReference>
<dbReference type="PDB" id="4UED">
    <property type="method" value="X-ray"/>
    <property type="resolution" value="1.75 A"/>
    <property type="chains" value="B=50-83"/>
</dbReference>
<dbReference type="PDB" id="5BXV">
    <property type="method" value="X-ray"/>
    <property type="resolution" value="2.10 A"/>
    <property type="chains" value="B/D=43-84"/>
</dbReference>
<dbReference type="PDB" id="5EKV">
    <property type="method" value="X-ray"/>
    <property type="resolution" value="3.61 A"/>
    <property type="chains" value="B/D=51-64"/>
</dbReference>
<dbReference type="PDB" id="5NVN">
    <property type="method" value="X-ray"/>
    <property type="resolution" value="1.90 A"/>
    <property type="chains" value="B/D=50-83"/>
</dbReference>
<dbReference type="PDB" id="5WBJ">
    <property type="method" value="X-ray"/>
    <property type="resolution" value="3.00 A"/>
    <property type="chains" value="T=99-118"/>
</dbReference>
<dbReference type="PDB" id="6BCU">
    <property type="method" value="EM"/>
    <property type="resolution" value="3.43 A"/>
    <property type="chains" value="X/Z=1-118"/>
</dbReference>
<dbReference type="PDB" id="6BCX">
    <property type="method" value="EM"/>
    <property type="resolution" value="3.00 A"/>
    <property type="chains" value="X/Z=1-118"/>
</dbReference>
<dbReference type="PDB" id="8RCH">
    <property type="method" value="EM"/>
    <property type="resolution" value="4.00 A"/>
    <property type="chains" value="X/Z=1-118"/>
</dbReference>
<dbReference type="PDB" id="8RCK">
    <property type="method" value="EM"/>
    <property type="resolution" value="3.40 A"/>
    <property type="chains" value="X=1-118"/>
</dbReference>
<dbReference type="PDB" id="8RCN">
    <property type="method" value="EM"/>
    <property type="resolution" value="3.10 A"/>
    <property type="chains" value="X=1-118"/>
</dbReference>
<dbReference type="PDBsum" id="1EJ4"/>
<dbReference type="PDBsum" id="1EJH"/>
<dbReference type="PDBsum" id="1WKW"/>
<dbReference type="PDBsum" id="2JGB"/>
<dbReference type="PDBsum" id="2JGC"/>
<dbReference type="PDBsum" id="2V8W"/>
<dbReference type="PDBsum" id="2V8X"/>
<dbReference type="PDBsum" id="2V8Y"/>
<dbReference type="PDBsum" id="3HXG"/>
<dbReference type="PDBsum" id="3HXI"/>
<dbReference type="PDBsum" id="3M93"/>
<dbReference type="PDBsum" id="3M94"/>
<dbReference type="PDBsum" id="3U7X"/>
<dbReference type="PDBsum" id="4UED"/>
<dbReference type="PDBsum" id="5BXV"/>
<dbReference type="PDBsum" id="5EKV"/>
<dbReference type="PDBsum" id="5NVN"/>
<dbReference type="PDBsum" id="5WBJ"/>
<dbReference type="PDBsum" id="6BCU"/>
<dbReference type="PDBsum" id="6BCX"/>
<dbReference type="PDBsum" id="8RCH"/>
<dbReference type="PDBsum" id="8RCK"/>
<dbReference type="PDBsum" id="8RCN"/>
<dbReference type="BMRB" id="Q13541"/>
<dbReference type="EMDB" id="EMD-19052"/>
<dbReference type="EMDB" id="EMD-19053"/>
<dbReference type="EMDB" id="EMD-19056"/>
<dbReference type="EMDB" id="EMD-7086"/>
<dbReference type="EMDB" id="EMD-7087"/>
<dbReference type="SMR" id="Q13541"/>
<dbReference type="BioGRID" id="108293">
    <property type="interactions" value="93"/>
</dbReference>
<dbReference type="DIP" id="DIP-30944N"/>
<dbReference type="ELM" id="Q13541"/>
<dbReference type="FunCoup" id="Q13541">
    <property type="interactions" value="1310"/>
</dbReference>
<dbReference type="IntAct" id="Q13541">
    <property type="interactions" value="33"/>
</dbReference>
<dbReference type="MINT" id="Q13541"/>
<dbReference type="STRING" id="9606.ENSP00000340691"/>
<dbReference type="BindingDB" id="Q13541"/>
<dbReference type="ChEMBL" id="CHEMBL3351214"/>
<dbReference type="GlyGen" id="Q13541">
    <property type="glycosylation" value="3 sites, 1 O-linked glycan (3 sites)"/>
</dbReference>
<dbReference type="iPTMnet" id="Q13541"/>
<dbReference type="MetOSite" id="Q13541"/>
<dbReference type="PhosphoSitePlus" id="Q13541"/>
<dbReference type="BioMuta" id="EIF4EBP1"/>
<dbReference type="DMDM" id="34921508"/>
<dbReference type="jPOST" id="Q13541"/>
<dbReference type="MassIVE" id="Q13541"/>
<dbReference type="PaxDb" id="9606-ENSP00000340691"/>
<dbReference type="PeptideAtlas" id="Q13541"/>
<dbReference type="ProteomicsDB" id="59525"/>
<dbReference type="Pumba" id="Q13541"/>
<dbReference type="TopDownProteomics" id="Q13541"/>
<dbReference type="Antibodypedia" id="3558">
    <property type="antibodies" value="2026 antibodies from 47 providers"/>
</dbReference>
<dbReference type="DNASU" id="1978"/>
<dbReference type="Ensembl" id="ENST00000338825.5">
    <property type="protein sequence ID" value="ENSP00000340691.4"/>
    <property type="gene ID" value="ENSG00000187840.5"/>
</dbReference>
<dbReference type="GeneID" id="1978"/>
<dbReference type="KEGG" id="hsa:1978"/>
<dbReference type="MANE-Select" id="ENST00000338825.5">
    <property type="protein sequence ID" value="ENSP00000340691.4"/>
    <property type="RefSeq nucleotide sequence ID" value="NM_004095.4"/>
    <property type="RefSeq protein sequence ID" value="NP_004086.1"/>
</dbReference>
<dbReference type="UCSC" id="uc003xks.4">
    <property type="organism name" value="human"/>
</dbReference>
<dbReference type="AGR" id="HGNC:3288"/>
<dbReference type="CTD" id="1978"/>
<dbReference type="DisGeNET" id="1978"/>
<dbReference type="GeneCards" id="EIF4EBP1"/>
<dbReference type="HGNC" id="HGNC:3288">
    <property type="gene designation" value="EIF4EBP1"/>
</dbReference>
<dbReference type="HPA" id="ENSG00000187840">
    <property type="expression patterns" value="Tissue enhanced (pancreas, salivary gland)"/>
</dbReference>
<dbReference type="MIM" id="602223">
    <property type="type" value="gene"/>
</dbReference>
<dbReference type="neXtProt" id="NX_Q13541"/>
<dbReference type="OpenTargets" id="ENSG00000187840"/>
<dbReference type="PharmGKB" id="PA27715"/>
<dbReference type="VEuPathDB" id="HostDB:ENSG00000187840"/>
<dbReference type="eggNOG" id="ENOG502S4SY">
    <property type="taxonomic scope" value="Eukaryota"/>
</dbReference>
<dbReference type="GeneTree" id="ENSGT00940000159932"/>
<dbReference type="HOGENOM" id="CLU_111706_0_0_1"/>
<dbReference type="InParanoid" id="Q13541"/>
<dbReference type="OMA" id="DEHPQFE"/>
<dbReference type="OrthoDB" id="19729at2759"/>
<dbReference type="PAN-GO" id="Q13541">
    <property type="GO annotations" value="3 GO annotations based on evolutionary models"/>
</dbReference>
<dbReference type="PhylomeDB" id="Q13541"/>
<dbReference type="TreeFam" id="TF101530"/>
<dbReference type="PathwayCommons" id="Q13541"/>
<dbReference type="Reactome" id="R-HSA-166208">
    <property type="pathway name" value="mTORC1-mediated signalling"/>
</dbReference>
<dbReference type="Reactome" id="R-HSA-72662">
    <property type="pathway name" value="Activation of the mRNA upon binding of the cap-binding complex and eIFs, and subsequent binding to 43S"/>
</dbReference>
<dbReference type="SignaLink" id="Q13541"/>
<dbReference type="SIGNOR" id="Q13541"/>
<dbReference type="BioGRID-ORCS" id="1978">
    <property type="hits" value="33 hits in 1153 CRISPR screens"/>
</dbReference>
<dbReference type="ChiTaRS" id="EIF4EBP1">
    <property type="organism name" value="human"/>
</dbReference>
<dbReference type="EvolutionaryTrace" id="Q13541"/>
<dbReference type="GeneWiki" id="EIF4EBP1"/>
<dbReference type="GenomeRNAi" id="1978"/>
<dbReference type="Pharos" id="Q13541">
    <property type="development level" value="Tbio"/>
</dbReference>
<dbReference type="PRO" id="PR:Q13541"/>
<dbReference type="Proteomes" id="UP000005640">
    <property type="component" value="Chromosome 8"/>
</dbReference>
<dbReference type="RNAct" id="Q13541">
    <property type="molecule type" value="protein"/>
</dbReference>
<dbReference type="Bgee" id="ENSG00000187840">
    <property type="expression patterns" value="Expressed in body of pancreas and 176 other cell types or tissues"/>
</dbReference>
<dbReference type="GO" id="GO:0005737">
    <property type="term" value="C:cytoplasm"/>
    <property type="evidence" value="ECO:0000318"/>
    <property type="project" value="GO_Central"/>
</dbReference>
<dbReference type="GO" id="GO:0005829">
    <property type="term" value="C:cytosol"/>
    <property type="evidence" value="ECO:0000314"/>
    <property type="project" value="AgBase"/>
</dbReference>
<dbReference type="GO" id="GO:0005634">
    <property type="term" value="C:nucleus"/>
    <property type="evidence" value="ECO:0007669"/>
    <property type="project" value="UniProtKB-SubCell"/>
</dbReference>
<dbReference type="GO" id="GO:0008190">
    <property type="term" value="F:eukaryotic initiation factor 4E binding"/>
    <property type="evidence" value="ECO:0000314"/>
    <property type="project" value="AgBase"/>
</dbReference>
<dbReference type="GO" id="GO:0031369">
    <property type="term" value="F:translation initiation factor binding"/>
    <property type="evidence" value="ECO:0000353"/>
    <property type="project" value="DisProt"/>
</dbReference>
<dbReference type="GO" id="GO:0030371">
    <property type="term" value="F:translation repressor activity"/>
    <property type="evidence" value="ECO:0000314"/>
    <property type="project" value="UniProtKB"/>
</dbReference>
<dbReference type="GO" id="GO:0000082">
    <property type="term" value="P:G1/S transition of mitotic cell cycle"/>
    <property type="evidence" value="ECO:0000315"/>
    <property type="project" value="UniProtKB"/>
</dbReference>
<dbReference type="GO" id="GO:0017148">
    <property type="term" value="P:negative regulation of translation"/>
    <property type="evidence" value="ECO:0000314"/>
    <property type="project" value="DisProt"/>
</dbReference>
<dbReference type="GO" id="GO:0045947">
    <property type="term" value="P:negative regulation of translational initiation"/>
    <property type="evidence" value="ECO:0000314"/>
    <property type="project" value="UniProtKB"/>
</dbReference>
<dbReference type="GO" id="GO:0045931">
    <property type="term" value="P:positive regulation of mitotic cell cycle"/>
    <property type="evidence" value="ECO:0000315"/>
    <property type="project" value="UniProtKB"/>
</dbReference>
<dbReference type="GO" id="GO:0031929">
    <property type="term" value="P:TOR signaling"/>
    <property type="evidence" value="ECO:0000314"/>
    <property type="project" value="UniProtKB"/>
</dbReference>
<dbReference type="DisProt" id="DP00028"/>
<dbReference type="IDEAL" id="IID00170"/>
<dbReference type="InterPro" id="IPR008606">
    <property type="entry name" value="EIF4EBP"/>
</dbReference>
<dbReference type="PANTHER" id="PTHR12669">
    <property type="entry name" value="EUKARYOTIC TRANSLATION INITIATION FACTOR 4E-BINDING PROTEIN"/>
    <property type="match status" value="1"/>
</dbReference>
<dbReference type="PANTHER" id="PTHR12669:SF14">
    <property type="entry name" value="EUKARYOTIC TRANSLATION INITIATION FACTOR 4E-BINDING PROTEIN 1"/>
    <property type="match status" value="1"/>
</dbReference>
<dbReference type="Pfam" id="PF05456">
    <property type="entry name" value="eIF_4EBP"/>
    <property type="match status" value="1"/>
</dbReference>
<proteinExistence type="evidence at protein level"/>